<reference key="1">
    <citation type="journal article" date="2002" name="Proc. Natl. Acad. Sci. U.S.A.">
        <title>The complete genome sequence of Chlorobium tepidum TLS, a photosynthetic, anaerobic, green-sulfur bacterium.</title>
        <authorList>
            <person name="Eisen J.A."/>
            <person name="Nelson K.E."/>
            <person name="Paulsen I.T."/>
            <person name="Heidelberg J.F."/>
            <person name="Wu M."/>
            <person name="Dodson R.J."/>
            <person name="DeBoy R.T."/>
            <person name="Gwinn M.L."/>
            <person name="Nelson W.C."/>
            <person name="Haft D.H."/>
            <person name="Hickey E.K."/>
            <person name="Peterson J.D."/>
            <person name="Durkin A.S."/>
            <person name="Kolonay J.F."/>
            <person name="Yang F."/>
            <person name="Holt I.E."/>
            <person name="Umayam L.A."/>
            <person name="Mason T.M."/>
            <person name="Brenner M."/>
            <person name="Shea T.P."/>
            <person name="Parksey D.S."/>
            <person name="Nierman W.C."/>
            <person name="Feldblyum T.V."/>
            <person name="Hansen C.L."/>
            <person name="Craven M.B."/>
            <person name="Radune D."/>
            <person name="Vamathevan J.J."/>
            <person name="Khouri H.M."/>
            <person name="White O."/>
            <person name="Gruber T.M."/>
            <person name="Ketchum K.A."/>
            <person name="Venter J.C."/>
            <person name="Tettelin H."/>
            <person name="Bryant D.A."/>
            <person name="Fraser C.M."/>
        </authorList>
    </citation>
    <scope>NUCLEOTIDE SEQUENCE [LARGE SCALE GENOMIC DNA]</scope>
    <source>
        <strain>ATCC 49652 / DSM 12025 / NBRC 103806 / TLS</strain>
    </source>
</reference>
<gene>
    <name evidence="1" type="primary">plsX</name>
    <name type="ordered locus">CT2113</name>
</gene>
<protein>
    <recommendedName>
        <fullName evidence="1">Phosphate acyltransferase</fullName>
        <ecNumber evidence="1">2.3.1.274</ecNumber>
    </recommendedName>
    <alternativeName>
        <fullName evidence="1">Acyl-ACP phosphotransacylase</fullName>
    </alternativeName>
    <alternativeName>
        <fullName evidence="1">Acyl-[acyl-carrier-protein]--phosphate acyltransferase</fullName>
    </alternativeName>
    <alternativeName>
        <fullName evidence="1">Phosphate-acyl-ACP acyltransferase</fullName>
    </alternativeName>
</protein>
<keyword id="KW-0963">Cytoplasm</keyword>
<keyword id="KW-0444">Lipid biosynthesis</keyword>
<keyword id="KW-0443">Lipid metabolism</keyword>
<keyword id="KW-0594">Phospholipid biosynthesis</keyword>
<keyword id="KW-1208">Phospholipid metabolism</keyword>
<keyword id="KW-1185">Reference proteome</keyword>
<keyword id="KW-0808">Transferase</keyword>
<sequence length="331" mass="35880">MGGDNAPACVVEGVIDALRESGNRFEILLIGQEEKVAPLLQQYDTGALKLRFVHAPEVITMEDVPATAVKAKQESSLVRGLKLCKAKDADAFVSAGNTGAMMAASLFVLGRIPGVLRPTIYAYFPRLGEGLTNLVDVGANVDCKPENLVQFAEMLTIYQRYAAKIEQPVVGLLNIGEEEGKGPDYLKQAWKMLQKAHEEQKINFIGNIEGHDILAGKATIVVCDGLVGNTILKFGESIPHFLGAIFKPALEKLVKEGKLDQNSAVLAGQTFKGIFEPFDVEKFGGVPFLGVDGISIVGHGRSSARAIKNMIYMAEHMIEQRVNERIAKMLA</sequence>
<evidence type="ECO:0000255" key="1">
    <source>
        <dbReference type="HAMAP-Rule" id="MF_00019"/>
    </source>
</evidence>
<name>PLSX_CHLTE</name>
<organism>
    <name type="scientific">Chlorobaculum tepidum (strain ATCC 49652 / DSM 12025 / NBRC 103806 / TLS)</name>
    <name type="common">Chlorobium tepidum</name>
    <dbReference type="NCBI Taxonomy" id="194439"/>
    <lineage>
        <taxon>Bacteria</taxon>
        <taxon>Pseudomonadati</taxon>
        <taxon>Chlorobiota</taxon>
        <taxon>Chlorobiia</taxon>
        <taxon>Chlorobiales</taxon>
        <taxon>Chlorobiaceae</taxon>
        <taxon>Chlorobaculum</taxon>
    </lineage>
</organism>
<proteinExistence type="inferred from homology"/>
<feature type="chain" id="PRO_0000189865" description="Phosphate acyltransferase">
    <location>
        <begin position="1"/>
        <end position="331"/>
    </location>
</feature>
<dbReference type="EC" id="2.3.1.274" evidence="1"/>
<dbReference type="EMBL" id="AE006470">
    <property type="protein sequence ID" value="AAM73329.1"/>
    <property type="molecule type" value="Genomic_DNA"/>
</dbReference>
<dbReference type="RefSeq" id="NP_662987.1">
    <property type="nucleotide sequence ID" value="NC_002932.3"/>
</dbReference>
<dbReference type="SMR" id="Q8KAP3"/>
<dbReference type="STRING" id="194439.CT2113"/>
<dbReference type="EnsemblBacteria" id="AAM73329">
    <property type="protein sequence ID" value="AAM73329"/>
    <property type="gene ID" value="CT2113"/>
</dbReference>
<dbReference type="KEGG" id="cte:CT2113"/>
<dbReference type="PATRIC" id="fig|194439.7.peg.1914"/>
<dbReference type="eggNOG" id="COG0416">
    <property type="taxonomic scope" value="Bacteria"/>
</dbReference>
<dbReference type="OrthoDB" id="9806408at2"/>
<dbReference type="UniPathway" id="UPA00085"/>
<dbReference type="Proteomes" id="UP000001007">
    <property type="component" value="Chromosome"/>
</dbReference>
<dbReference type="GO" id="GO:0005737">
    <property type="term" value="C:cytoplasm"/>
    <property type="evidence" value="ECO:0007669"/>
    <property type="project" value="UniProtKB-SubCell"/>
</dbReference>
<dbReference type="GO" id="GO:0043811">
    <property type="term" value="F:phosphate:acyl-[acyl carrier protein] acyltransferase activity"/>
    <property type="evidence" value="ECO:0007669"/>
    <property type="project" value="UniProtKB-UniRule"/>
</dbReference>
<dbReference type="GO" id="GO:0006633">
    <property type="term" value="P:fatty acid biosynthetic process"/>
    <property type="evidence" value="ECO:0007669"/>
    <property type="project" value="UniProtKB-UniRule"/>
</dbReference>
<dbReference type="GO" id="GO:0008654">
    <property type="term" value="P:phospholipid biosynthetic process"/>
    <property type="evidence" value="ECO:0007669"/>
    <property type="project" value="UniProtKB-KW"/>
</dbReference>
<dbReference type="Gene3D" id="3.40.718.10">
    <property type="entry name" value="Isopropylmalate Dehydrogenase"/>
    <property type="match status" value="1"/>
</dbReference>
<dbReference type="HAMAP" id="MF_00019">
    <property type="entry name" value="PlsX"/>
    <property type="match status" value="1"/>
</dbReference>
<dbReference type="InterPro" id="IPR003664">
    <property type="entry name" value="FA_synthesis"/>
</dbReference>
<dbReference type="InterPro" id="IPR012281">
    <property type="entry name" value="Phospholipid_synth_PlsX-like"/>
</dbReference>
<dbReference type="NCBIfam" id="TIGR00182">
    <property type="entry name" value="plsX"/>
    <property type="match status" value="1"/>
</dbReference>
<dbReference type="PANTHER" id="PTHR30100">
    <property type="entry name" value="FATTY ACID/PHOSPHOLIPID SYNTHESIS PROTEIN PLSX"/>
    <property type="match status" value="1"/>
</dbReference>
<dbReference type="PANTHER" id="PTHR30100:SF1">
    <property type="entry name" value="PHOSPHATE ACYLTRANSFERASE"/>
    <property type="match status" value="1"/>
</dbReference>
<dbReference type="Pfam" id="PF02504">
    <property type="entry name" value="FA_synthesis"/>
    <property type="match status" value="1"/>
</dbReference>
<dbReference type="PIRSF" id="PIRSF002465">
    <property type="entry name" value="Phsphlp_syn_PlsX"/>
    <property type="match status" value="1"/>
</dbReference>
<dbReference type="SUPFAM" id="SSF53659">
    <property type="entry name" value="Isocitrate/Isopropylmalate dehydrogenase-like"/>
    <property type="match status" value="1"/>
</dbReference>
<accession>Q8KAP3</accession>
<comment type="function">
    <text evidence="1">Catalyzes the reversible formation of acyl-phosphate (acyl-PO(4)) from acyl-[acyl-carrier-protein] (acyl-ACP). This enzyme utilizes acyl-ACP as fatty acyl donor, but not acyl-CoA.</text>
</comment>
<comment type="catalytic activity">
    <reaction evidence="1">
        <text>a fatty acyl-[ACP] + phosphate = an acyl phosphate + holo-[ACP]</text>
        <dbReference type="Rhea" id="RHEA:42292"/>
        <dbReference type="Rhea" id="RHEA-COMP:9685"/>
        <dbReference type="Rhea" id="RHEA-COMP:14125"/>
        <dbReference type="ChEBI" id="CHEBI:43474"/>
        <dbReference type="ChEBI" id="CHEBI:59918"/>
        <dbReference type="ChEBI" id="CHEBI:64479"/>
        <dbReference type="ChEBI" id="CHEBI:138651"/>
        <dbReference type="EC" id="2.3.1.274"/>
    </reaction>
</comment>
<comment type="pathway">
    <text evidence="1">Lipid metabolism; phospholipid metabolism.</text>
</comment>
<comment type="subunit">
    <text evidence="1">Homodimer. Probably interacts with PlsY.</text>
</comment>
<comment type="subcellular location">
    <subcellularLocation>
        <location evidence="1">Cytoplasm</location>
    </subcellularLocation>
    <text evidence="1">Associated with the membrane possibly through PlsY.</text>
</comment>
<comment type="similarity">
    <text evidence="1">Belongs to the PlsX family.</text>
</comment>